<comment type="function">
    <text evidence="3 6 7 8 9 10 12">Substrate-recognition component of the GID E3 ligase complex recruiting N termini and catalyzing ubiquitination of proteins targeted for degradation. GID E3 is regulated through assembly with interchangeable N-degron-binding substrate receptors induced by distinct environmental perturbations (PubMed:12686616, PubMed:18508925, PubMed:28126757, PubMed:31708416). Required for the adaptation to the presence of glucose in the growth medium; mediates the degradation of enzymes involved in gluconeogenesis when cells are shifted to glucose-containing medium (PubMed:12686616, PubMed:31708416, PubMed:9508768). Required for proteasome-dependent catabolite degradation of fructose-1,6-bisphosphatase (FBP1), malate dehydrogenase (MDH2), and other gluconeogenic enzymes, probably by targeting FBP1-containing vesicles to the vacuole, but is not required for FBP1 sequestration in cytoplasmic vesicles (PubMed:12686616, PubMed:22645139, PubMed:28126757, PubMed:9508768). Specific for substrates with an N-terminal Pro (Pro/N-degron), including FBP1, ICL1 and MDH2. Has high affinity for the N-terminal sequence Pro-Thr-Leu-Val, and can bind peptides with an N-terminal sequence of the type Pro-[Gly,Ala,Ser,Thr,Asp,Asn,Tyr,His]-[Ala,Val,Leu,Ile,Lys,Arg]-[Val,Cys,Pro,Leu,Ile,Trp] (PubMed:28126757). Also recognizes nonproline N-terminal residues and targets an Ile-Gly-Lys-Trp-bearing protein for rapid degradation (PubMed:32513738).</text>
</comment>
<comment type="subunit">
    <text evidence="5 6 7 8 9 11">Substrate-recognition component of the GID/CTLH ubiquitin ligase complex (PubMed:28126757). In the absence of stress, the complex exists as an inactive anticipatory complex (GID(Ant)), composed of VID30/GID1, the E3 ubiquitin-ligase RMD5/GID2, VID28/GID5, GID8, and the RING-like subunit FYV10/GID9, awaiting a substrate receptor to form the active E3 ligase complex (PubMed:16872538, PubMed:18508925). When cells are shifted to glucose-containing medium, the substrate receptor VID24/GID4 is induced and becomes part of the complex, named GID(SR4) (PubMed:18508925, PubMed:22645139, PubMed:31708416). Additionally, GID7 transforms the GID(SR4) E3 ligase core into a higher-order supramolecular assembly (Chelator-GID(SR4)) specifically tailored for FBP1 ubiquitination (PubMed:33905682). Under osmotic or heat stress, the substrate receptor GID10 is induced and becomes part of the complex, named GID(SR10) (PubMed:31708416). Within the complex, VVID24/GID4 is recruited to the complex via interaction with VID28/GID5 (PubMed:22645139). Interacts with proteins that have an N-terminal Pro/N-degron, including FBP1, ICL1 and MDH2 (PubMed:28126757).</text>
</comment>
<comment type="interaction">
    <interactant intactId="EBI-20304">
        <id>P38263</id>
    </interactant>
    <interactant intactId="EBI-24957">
        <id>P40547</id>
        <label>VID28</label>
    </interactant>
    <organismsDiffer>false</organismsDiffer>
    <experiments>2</experiments>
</comment>
<comment type="subcellular location">
    <subcellularLocation>
        <location evidence="12">Cytoplasmic vesicle membrane</location>
        <topology evidence="12">Peripheral membrane protein</topology>
    </subcellularLocation>
    <text evidence="12">Colocalizes with FBPase-containing vesicles.</text>
</comment>
<comment type="induction">
    <text evidence="6 12">Rapidly induced by a shift to glucose-containing medium.</text>
</comment>
<comment type="PTM">
    <text evidence="6">Ubiquitinated by the GID complex, leading to subsequent proteasomal degradation.</text>
</comment>
<comment type="miscellaneous">
    <text evidence="4">Present with 6650 molecules/cell in log phase SD medium.</text>
</comment>
<comment type="similarity">
    <text evidence="15">Belongs to the GID4/VID24 family.</text>
</comment>
<keyword id="KW-0002">3D-structure</keyword>
<keyword id="KW-0968">Cytoplasmic vesicle</keyword>
<keyword id="KW-1017">Isopeptide bond</keyword>
<keyword id="KW-0472">Membrane</keyword>
<keyword id="KW-0597">Phosphoprotein</keyword>
<keyword id="KW-0653">Protein transport</keyword>
<keyword id="KW-1185">Reference proteome</keyword>
<keyword id="KW-0813">Transport</keyword>
<keyword id="KW-0832">Ubl conjugation</keyword>
<keyword id="KW-0833">Ubl conjugation pathway</keyword>
<evidence type="ECO:0000250" key="1">
    <source>
        <dbReference type="UniProtKB" id="Q8IVV7"/>
    </source>
</evidence>
<evidence type="ECO:0000256" key="2">
    <source>
        <dbReference type="SAM" id="MobiDB-lite"/>
    </source>
</evidence>
<evidence type="ECO:0000269" key="3">
    <source>
    </source>
</evidence>
<evidence type="ECO:0000269" key="4">
    <source>
    </source>
</evidence>
<evidence type="ECO:0000269" key="5">
    <source>
    </source>
</evidence>
<evidence type="ECO:0000269" key="6">
    <source>
    </source>
</evidence>
<evidence type="ECO:0000269" key="7">
    <source>
    </source>
</evidence>
<evidence type="ECO:0000269" key="8">
    <source>
    </source>
</evidence>
<evidence type="ECO:0000269" key="9">
    <source>
    </source>
</evidence>
<evidence type="ECO:0000269" key="10">
    <source>
    </source>
</evidence>
<evidence type="ECO:0000269" key="11">
    <source>
    </source>
</evidence>
<evidence type="ECO:0000269" key="12">
    <source>
    </source>
</evidence>
<evidence type="ECO:0000303" key="13">
    <source>
    </source>
</evidence>
<evidence type="ECO:0000303" key="14">
    <source>
    </source>
</evidence>
<evidence type="ECO:0000305" key="15"/>
<evidence type="ECO:0000312" key="16">
    <source>
        <dbReference type="SGD" id="S000000309"/>
    </source>
</evidence>
<evidence type="ECO:0007744" key="17">
    <source>
        <dbReference type="PDB" id="6SWY"/>
    </source>
</evidence>
<evidence type="ECO:0007744" key="18">
    <source>
        <dbReference type="PDB" id="7WUG"/>
    </source>
</evidence>
<evidence type="ECO:0007744" key="19">
    <source>
    </source>
</evidence>
<evidence type="ECO:0007744" key="20">
    <source>
    </source>
</evidence>
<evidence type="ECO:0007829" key="21">
    <source>
        <dbReference type="PDB" id="6SWY"/>
    </source>
</evidence>
<evidence type="ECO:0007829" key="22">
    <source>
        <dbReference type="PDB" id="7WUG"/>
    </source>
</evidence>
<protein>
    <recommendedName>
        <fullName evidence="15">GID complex substrate-recognition subunit 4</fullName>
    </recommendedName>
    <alternativeName>
        <fullName evidence="13">Glucose-induced degradation protein 4</fullName>
    </alternativeName>
    <alternativeName>
        <fullName evidence="14">Vacuolar import and degradation protein 24</fullName>
    </alternativeName>
</protein>
<proteinExistence type="evidence at protein level"/>
<sequence>MINNPKVDSVAEKPKAVTSKQSEQAASPEPTPAPPVSRNQYPITFNLTSTAPFHLHDRHRYLQEQDLYKCASRDSLSSLQQLAHTPNGSTRKKYIVEDQSPYSSENPVIVTSSYNHTVCTNYLRPRMQFTGYQISGYKRYQVTVNLKTVDLPKKDCTSLSPHLSGFLSIRGLTNQHPEISTYFEAYAVNHKELGFLSSSWKDEPVLNEFKATDQTDLEHWINFPSFRQLFLMSQKNGLNSTDDNGTTNAAKKLPPQQLPTTPSADAGNISRIFSQEKQFDNYLNERFIFMKWKEKFLVPDALLMEGVDGASYDGFYYIVHDQVTGNIQGFYYHQDAEKFQQLELVPSLKNKVESSDCSFEFA</sequence>
<gene>
    <name evidence="14" type="primary">VID24</name>
    <name evidence="13" type="synonym">GID4</name>
    <name evidence="16" type="ordered locus">YBR105C</name>
    <name type="ORF">YBR0834</name>
</gene>
<feature type="chain" id="PRO_0000065826" description="GID complex substrate-recognition subunit 4">
    <location>
        <begin position="1"/>
        <end position="362"/>
    </location>
</feature>
<feature type="region of interest" description="Disordered" evidence="2">
    <location>
        <begin position="1"/>
        <end position="40"/>
    </location>
</feature>
<feature type="region of interest" description="Disordered" evidence="2">
    <location>
        <begin position="240"/>
        <end position="267"/>
    </location>
</feature>
<feature type="compositionally biased region" description="Polar residues" evidence="2">
    <location>
        <begin position="240"/>
        <end position="249"/>
    </location>
</feature>
<feature type="site" description="Interaction with the N-terminal Pro (Pro/N-degron) of proteins that are targeted for degradation" evidence="1">
    <location>
        <position position="133"/>
    </location>
</feature>
<feature type="site" description="Interaction with the N-terminal Pro (Pro/N-degron) of proteins that are targeted for degradation" evidence="1">
    <location>
        <position position="294"/>
    </location>
</feature>
<feature type="site" description="Interaction with the N-terminal Pro (Pro/N-degron) of proteins that are targeted for degradation" evidence="1">
    <location>
        <position position="316"/>
    </location>
</feature>
<feature type="modified residue" description="Phosphoserine" evidence="19">
    <location>
        <position position="27"/>
    </location>
</feature>
<feature type="cross-link" description="Glycyl lysine isopeptide (Lys-Gly) (interchain with G-Cter in ubiquitin)" evidence="20">
    <location>
        <position position="20"/>
    </location>
</feature>
<feature type="helix" evidence="21">
    <location>
        <begin position="93"/>
        <end position="96"/>
    </location>
</feature>
<feature type="turn" evidence="22">
    <location>
        <begin position="111"/>
        <end position="113"/>
    </location>
</feature>
<feature type="strand" evidence="22">
    <location>
        <begin position="121"/>
        <end position="123"/>
    </location>
</feature>
<feature type="strand" evidence="21">
    <location>
        <begin position="128"/>
        <end position="135"/>
    </location>
</feature>
<feature type="strand" evidence="21">
    <location>
        <begin position="138"/>
        <end position="149"/>
    </location>
</feature>
<feature type="strand" evidence="21">
    <location>
        <begin position="162"/>
        <end position="170"/>
    </location>
</feature>
<feature type="strand" evidence="21">
    <location>
        <begin position="179"/>
        <end position="187"/>
    </location>
</feature>
<feature type="strand" evidence="21">
    <location>
        <begin position="190"/>
        <end position="193"/>
    </location>
</feature>
<feature type="helix" evidence="21">
    <location>
        <begin position="206"/>
        <end position="208"/>
    </location>
</feature>
<feature type="helix" evidence="21">
    <location>
        <begin position="213"/>
        <end position="220"/>
    </location>
</feature>
<feature type="helix" evidence="21">
    <location>
        <begin position="224"/>
        <end position="229"/>
    </location>
</feature>
<feature type="helix" evidence="21">
    <location>
        <begin position="272"/>
        <end position="276"/>
    </location>
</feature>
<feature type="strand" evidence="21">
    <location>
        <begin position="284"/>
        <end position="299"/>
    </location>
</feature>
<feature type="strand" evidence="21">
    <location>
        <begin position="315"/>
        <end position="321"/>
    </location>
</feature>
<feature type="turn" evidence="21">
    <location>
        <begin position="322"/>
        <end position="324"/>
    </location>
</feature>
<feature type="strand" evidence="21">
    <location>
        <begin position="327"/>
        <end position="332"/>
    </location>
</feature>
<feature type="strand" evidence="21">
    <location>
        <begin position="343"/>
        <end position="346"/>
    </location>
</feature>
<dbReference type="EMBL" id="U86750">
    <property type="protein sequence ID" value="AAC23706.1"/>
    <property type="molecule type" value="Genomic_DNA"/>
</dbReference>
<dbReference type="EMBL" id="X78993">
    <property type="protein sequence ID" value="CAA55608.1"/>
    <property type="molecule type" value="Genomic_DNA"/>
</dbReference>
<dbReference type="EMBL" id="Z35974">
    <property type="protein sequence ID" value="CAA85060.1"/>
    <property type="molecule type" value="Genomic_DNA"/>
</dbReference>
<dbReference type="EMBL" id="AY693057">
    <property type="protein sequence ID" value="AAT93076.1"/>
    <property type="molecule type" value="Genomic_DNA"/>
</dbReference>
<dbReference type="EMBL" id="BK006936">
    <property type="protein sequence ID" value="DAA07224.1"/>
    <property type="molecule type" value="Genomic_DNA"/>
</dbReference>
<dbReference type="PIR" id="S48270">
    <property type="entry name" value="S48270"/>
</dbReference>
<dbReference type="RefSeq" id="NP_009663.1">
    <property type="nucleotide sequence ID" value="NM_001178453.1"/>
</dbReference>
<dbReference type="PDB" id="6SWY">
    <property type="method" value="EM"/>
    <property type="resolution" value="3.20 A"/>
    <property type="chains" value="4=1-362"/>
</dbReference>
<dbReference type="PDB" id="7WUG">
    <property type="method" value="EM"/>
    <property type="resolution" value="3.30 A"/>
    <property type="chains" value="4=1-362"/>
</dbReference>
<dbReference type="PDBsum" id="6SWY"/>
<dbReference type="PDBsum" id="7WUG"/>
<dbReference type="EMDB" id="EMD-10333"/>
<dbReference type="SMR" id="P38263"/>
<dbReference type="BioGRID" id="32809">
    <property type="interactions" value="349"/>
</dbReference>
<dbReference type="ComplexPortal" id="CPX-301">
    <property type="entry name" value="GID E3 ubiquitin ligase complex, GID4 variant"/>
</dbReference>
<dbReference type="DIP" id="DIP-4502N"/>
<dbReference type="FunCoup" id="P38263">
    <property type="interactions" value="388"/>
</dbReference>
<dbReference type="IntAct" id="P38263">
    <property type="interactions" value="28"/>
</dbReference>
<dbReference type="MINT" id="P38263"/>
<dbReference type="STRING" id="4932.YBR105C"/>
<dbReference type="GlyGen" id="P38263">
    <property type="glycosylation" value="1 site"/>
</dbReference>
<dbReference type="iPTMnet" id="P38263"/>
<dbReference type="PaxDb" id="4932-YBR105C"/>
<dbReference type="PeptideAtlas" id="P38263"/>
<dbReference type="EnsemblFungi" id="YBR105C_mRNA">
    <property type="protein sequence ID" value="YBR105C"/>
    <property type="gene ID" value="YBR105C"/>
</dbReference>
<dbReference type="GeneID" id="852402"/>
<dbReference type="KEGG" id="sce:YBR105C"/>
<dbReference type="AGR" id="SGD:S000000309"/>
<dbReference type="SGD" id="S000000309">
    <property type="gene designation" value="VID24"/>
</dbReference>
<dbReference type="VEuPathDB" id="FungiDB:YBR105C"/>
<dbReference type="eggNOG" id="KOG4635">
    <property type="taxonomic scope" value="Eukaryota"/>
</dbReference>
<dbReference type="GeneTree" id="ENSGT00500000044930"/>
<dbReference type="HOGENOM" id="CLU_028759_3_0_1"/>
<dbReference type="InParanoid" id="P38263"/>
<dbReference type="OMA" id="NILGFYY"/>
<dbReference type="OrthoDB" id="62at2759"/>
<dbReference type="BioCyc" id="YEAST:G3O-29067-MONOMER"/>
<dbReference type="BioGRID-ORCS" id="852402">
    <property type="hits" value="0 hits in 10 CRISPR screens"/>
</dbReference>
<dbReference type="CD-CODE" id="E03F929F">
    <property type="entry name" value="Stress granule"/>
</dbReference>
<dbReference type="PRO" id="PR:P38263"/>
<dbReference type="Proteomes" id="UP000002311">
    <property type="component" value="Chromosome II"/>
</dbReference>
<dbReference type="RNAct" id="P38263">
    <property type="molecule type" value="protein"/>
</dbReference>
<dbReference type="GO" id="GO:0031410">
    <property type="term" value="C:cytoplasmic vesicle"/>
    <property type="evidence" value="ECO:0000314"/>
    <property type="project" value="SGD"/>
</dbReference>
<dbReference type="GO" id="GO:0030659">
    <property type="term" value="C:cytoplasmic vesicle membrane"/>
    <property type="evidence" value="ECO:0007669"/>
    <property type="project" value="UniProtKB-SubCell"/>
</dbReference>
<dbReference type="GO" id="GO:0005829">
    <property type="term" value="C:cytosol"/>
    <property type="evidence" value="ECO:0007005"/>
    <property type="project" value="SGD"/>
</dbReference>
<dbReference type="GO" id="GO:0034657">
    <property type="term" value="C:GID complex"/>
    <property type="evidence" value="ECO:0000314"/>
    <property type="project" value="SGD"/>
</dbReference>
<dbReference type="GO" id="GO:0005773">
    <property type="term" value="C:vacuole"/>
    <property type="evidence" value="ECO:0007669"/>
    <property type="project" value="GOC"/>
</dbReference>
<dbReference type="GO" id="GO:0045721">
    <property type="term" value="P:negative regulation of gluconeogenesis"/>
    <property type="evidence" value="ECO:0000315"/>
    <property type="project" value="UniProtKB"/>
</dbReference>
<dbReference type="GO" id="GO:0043161">
    <property type="term" value="P:proteasome-mediated ubiquitin-dependent protein catabolic process"/>
    <property type="evidence" value="ECO:0000315"/>
    <property type="project" value="SGD"/>
</dbReference>
<dbReference type="GO" id="GO:0007039">
    <property type="term" value="P:protein catabolic process in the vacuole"/>
    <property type="evidence" value="ECO:0000315"/>
    <property type="project" value="SGD"/>
</dbReference>
<dbReference type="GO" id="GO:0006623">
    <property type="term" value="P:protein targeting to vacuole"/>
    <property type="evidence" value="ECO:0000315"/>
    <property type="project" value="SGD"/>
</dbReference>
<dbReference type="GO" id="GO:0071596">
    <property type="term" value="P:ubiquitin-dependent protein catabolic process via the N-end rule pathway"/>
    <property type="evidence" value="ECO:0000315"/>
    <property type="project" value="UniProtKB"/>
</dbReference>
<dbReference type="InterPro" id="IPR018618">
    <property type="entry name" value="Vacuolar_import/degrad_Vid24"/>
</dbReference>
<dbReference type="PANTHER" id="PTHR14534:SF3">
    <property type="entry name" value="GID COMPLEX SUBUNIT 4 HOMOLOG"/>
    <property type="match status" value="1"/>
</dbReference>
<dbReference type="PANTHER" id="PTHR14534">
    <property type="entry name" value="VACUOLAR IMPORT AND DEGRADATION PROTEIN 24"/>
    <property type="match status" value="1"/>
</dbReference>
<dbReference type="Pfam" id="PF09783">
    <property type="entry name" value="Vac_ImportDeg"/>
    <property type="match status" value="1"/>
</dbReference>
<accession>P38263</accession>
<accession>D6VQA4</accession>
<organism>
    <name type="scientific">Saccharomyces cerevisiae (strain ATCC 204508 / S288c)</name>
    <name type="common">Baker's yeast</name>
    <dbReference type="NCBI Taxonomy" id="559292"/>
    <lineage>
        <taxon>Eukaryota</taxon>
        <taxon>Fungi</taxon>
        <taxon>Dikarya</taxon>
        <taxon>Ascomycota</taxon>
        <taxon>Saccharomycotina</taxon>
        <taxon>Saccharomycetes</taxon>
        <taxon>Saccharomycetales</taxon>
        <taxon>Saccharomycetaceae</taxon>
        <taxon>Saccharomyces</taxon>
    </lineage>
</organism>
<name>GID4_YEAST</name>
<reference key="1">
    <citation type="journal article" date="1998" name="J. Cell Biol.">
        <title>Vid24p, a novel protein localized to the fructose-1, 6-bisphosphatase-containing vesicles, regulates targeting of fructose-1,6-bisphosphatase from the vesicles to the vacuole for degradation.</title>
        <authorList>
            <person name="Chiang M.C."/>
            <person name="Chiang H.L."/>
        </authorList>
    </citation>
    <scope>NUCLEOTIDE SEQUENCE [GENOMIC DNA]</scope>
    <scope>FUNCTION</scope>
    <scope>SUBCELLULAR LOCATION</scope>
    <scope>INDUCTION BY GLUCOSE</scope>
</reference>
<reference key="2">
    <citation type="journal article" date="1994" name="Yeast">
        <title>Analysis of a 70 kb region on the right arm of yeast chromosome II.</title>
        <authorList>
            <person name="Mannhaupt G."/>
            <person name="Stucka R."/>
            <person name="Ehnle S."/>
            <person name="Vetter I."/>
            <person name="Feldmann H."/>
        </authorList>
    </citation>
    <scope>NUCLEOTIDE SEQUENCE [GENOMIC DNA]</scope>
    <source>
        <strain>ATCC 204508 / S288c</strain>
    </source>
</reference>
<reference key="3">
    <citation type="journal article" date="1994" name="EMBO J.">
        <title>Complete DNA sequence of yeast chromosome II.</title>
        <authorList>
            <person name="Feldmann H."/>
            <person name="Aigle M."/>
            <person name="Aljinovic G."/>
            <person name="Andre B."/>
            <person name="Baclet M.C."/>
            <person name="Barthe C."/>
            <person name="Baur A."/>
            <person name="Becam A.-M."/>
            <person name="Biteau N."/>
            <person name="Boles E."/>
            <person name="Brandt T."/>
            <person name="Brendel M."/>
            <person name="Brueckner M."/>
            <person name="Bussereau F."/>
            <person name="Christiansen C."/>
            <person name="Contreras R."/>
            <person name="Crouzet M."/>
            <person name="Cziepluch C."/>
            <person name="Demolis N."/>
            <person name="Delaveau T."/>
            <person name="Doignon F."/>
            <person name="Domdey H."/>
            <person name="Duesterhus S."/>
            <person name="Dubois E."/>
            <person name="Dujon B."/>
            <person name="El Bakkoury M."/>
            <person name="Entian K.-D."/>
            <person name="Feuermann M."/>
            <person name="Fiers W."/>
            <person name="Fobo G.M."/>
            <person name="Fritz C."/>
            <person name="Gassenhuber J."/>
            <person name="Glansdorff N."/>
            <person name="Goffeau A."/>
            <person name="Grivell L.A."/>
            <person name="de Haan M."/>
            <person name="Hein C."/>
            <person name="Herbert C.J."/>
            <person name="Hollenberg C.P."/>
            <person name="Holmstroem K."/>
            <person name="Jacq C."/>
            <person name="Jacquet M."/>
            <person name="Jauniaux J.-C."/>
            <person name="Jonniaux J.-L."/>
            <person name="Kallesoee T."/>
            <person name="Kiesau P."/>
            <person name="Kirchrath L."/>
            <person name="Koetter P."/>
            <person name="Korol S."/>
            <person name="Liebl S."/>
            <person name="Logghe M."/>
            <person name="Lohan A.J.E."/>
            <person name="Louis E.J."/>
            <person name="Li Z.Y."/>
            <person name="Maat M.J."/>
            <person name="Mallet L."/>
            <person name="Mannhaupt G."/>
            <person name="Messenguy F."/>
            <person name="Miosga T."/>
            <person name="Molemans F."/>
            <person name="Mueller S."/>
            <person name="Nasr F."/>
            <person name="Obermaier B."/>
            <person name="Perea J."/>
            <person name="Pierard A."/>
            <person name="Piravandi E."/>
            <person name="Pohl F.M."/>
            <person name="Pohl T.M."/>
            <person name="Potier S."/>
            <person name="Proft M."/>
            <person name="Purnelle B."/>
            <person name="Ramezani Rad M."/>
            <person name="Rieger M."/>
            <person name="Rose M."/>
            <person name="Schaaff-Gerstenschlaeger I."/>
            <person name="Scherens B."/>
            <person name="Schwarzlose C."/>
            <person name="Skala J."/>
            <person name="Slonimski P.P."/>
            <person name="Smits P.H.M."/>
            <person name="Souciet J.-L."/>
            <person name="Steensma H.Y."/>
            <person name="Stucka R."/>
            <person name="Urrestarazu L.A."/>
            <person name="van der Aart Q.J.M."/>
            <person name="Van Dyck L."/>
            <person name="Vassarotti A."/>
            <person name="Vetter I."/>
            <person name="Vierendeels F."/>
            <person name="Vissers S."/>
            <person name="Wagner G."/>
            <person name="de Wergifosse P."/>
            <person name="Wolfe K.H."/>
            <person name="Zagulski M."/>
            <person name="Zimmermann F.K."/>
            <person name="Mewes H.-W."/>
            <person name="Kleine K."/>
        </authorList>
    </citation>
    <scope>NUCLEOTIDE SEQUENCE [LARGE SCALE GENOMIC DNA]</scope>
    <source>
        <strain>ATCC 204508 / S288c</strain>
    </source>
</reference>
<reference key="4">
    <citation type="journal article" date="2014" name="G3 (Bethesda)">
        <title>The reference genome sequence of Saccharomyces cerevisiae: Then and now.</title>
        <authorList>
            <person name="Engel S.R."/>
            <person name="Dietrich F.S."/>
            <person name="Fisk D.G."/>
            <person name="Binkley G."/>
            <person name="Balakrishnan R."/>
            <person name="Costanzo M.C."/>
            <person name="Dwight S.S."/>
            <person name="Hitz B.C."/>
            <person name="Karra K."/>
            <person name="Nash R.S."/>
            <person name="Weng S."/>
            <person name="Wong E.D."/>
            <person name="Lloyd P."/>
            <person name="Skrzypek M.S."/>
            <person name="Miyasato S.R."/>
            <person name="Simison M."/>
            <person name="Cherry J.M."/>
        </authorList>
    </citation>
    <scope>GENOME REANNOTATION</scope>
    <source>
        <strain>ATCC 204508 / S288c</strain>
    </source>
</reference>
<reference key="5">
    <citation type="journal article" date="2007" name="Genome Res.">
        <title>Approaching a complete repository of sequence-verified protein-encoding clones for Saccharomyces cerevisiae.</title>
        <authorList>
            <person name="Hu Y."/>
            <person name="Rolfs A."/>
            <person name="Bhullar B."/>
            <person name="Murthy T.V.S."/>
            <person name="Zhu C."/>
            <person name="Berger M.F."/>
            <person name="Camargo A.A."/>
            <person name="Kelley F."/>
            <person name="McCarron S."/>
            <person name="Jepson D."/>
            <person name="Richardson A."/>
            <person name="Raphael J."/>
            <person name="Moreira D."/>
            <person name="Taycher E."/>
            <person name="Zuo D."/>
            <person name="Mohr S."/>
            <person name="Kane M.F."/>
            <person name="Williamson J."/>
            <person name="Simpson A.J.G."/>
            <person name="Bulyk M.L."/>
            <person name="Harlow E."/>
            <person name="Marsischky G."/>
            <person name="Kolodner R.D."/>
            <person name="LaBaer J."/>
        </authorList>
    </citation>
    <scope>NUCLEOTIDE SEQUENCE [GENOMIC DNA]</scope>
    <source>
        <strain>ATCC 204508 / S288c</strain>
    </source>
</reference>
<reference key="6">
    <citation type="journal article" date="2003" name="Mol. Biol. Cell">
        <title>Catabolite degradation of fructose-1,6-bisphosphatase in the yeast Saccharomyces cerevisiae: a genome-wide screen identifies eight novel GID genes and indicates the existence of two degradation pathways.</title>
        <authorList>
            <person name="Regelmann J."/>
            <person name="Schuele T."/>
            <person name="Josupeit F.S."/>
            <person name="Horak J."/>
            <person name="Rose M."/>
            <person name="Entian K.-D."/>
            <person name="Thumm M."/>
            <person name="Wolf D.H."/>
        </authorList>
    </citation>
    <scope>FUNCTION</scope>
</reference>
<reference key="7">
    <citation type="journal article" date="2003" name="Nature">
        <title>Global analysis of protein expression in yeast.</title>
        <authorList>
            <person name="Ghaemmaghami S."/>
            <person name="Huh W.-K."/>
            <person name="Bower K."/>
            <person name="Howson R.W."/>
            <person name="Belle A."/>
            <person name="Dephoure N."/>
            <person name="O'Shea E.K."/>
            <person name="Weissman J.S."/>
        </authorList>
    </citation>
    <scope>LEVEL OF PROTEIN EXPRESSION [LARGE SCALE ANALYSIS]</scope>
</reference>
<reference key="8">
    <citation type="journal article" date="2006" name="BMC Bioinformatics">
        <title>PIPE: a protein-protein interaction prediction engine based on the re-occurring short polypeptide sequences between known interacting protein pairs.</title>
        <authorList>
            <person name="Pitre S."/>
            <person name="Dehne F."/>
            <person name="Chan A."/>
            <person name="Cheetham J."/>
            <person name="Duong A."/>
            <person name="Emili A."/>
            <person name="Gebbia M."/>
            <person name="Greenblatt J."/>
            <person name="Jessulat M."/>
            <person name="Krogan N."/>
            <person name="Luo X."/>
            <person name="Golshani A."/>
        </authorList>
    </citation>
    <scope>IDENTIFICATION IN GID COMPLEX</scope>
</reference>
<reference key="9">
    <citation type="journal article" date="2008" name="Mol. Biol. Cell">
        <title>The yeast GID complex, a novel ubiquitin ligase (E3) involved in the regulation of carbohydrate metabolism.</title>
        <authorList>
            <person name="Santt O."/>
            <person name="Pfirrmann T."/>
            <person name="Braun B."/>
            <person name="Juretschke J."/>
            <person name="Kimmig P."/>
            <person name="Scheel H."/>
            <person name="Hofmann K."/>
            <person name="Thumm M."/>
            <person name="Wolf D.H."/>
        </authorList>
    </citation>
    <scope>FUNCTION</scope>
    <scope>INDUCTION BY GLUCOSE</scope>
    <scope>UBIQUITINATION</scope>
</reference>
<reference key="10">
    <citation type="journal article" date="2008" name="Mol. Cell. Proteomics">
        <title>A multidimensional chromatography technology for in-depth phosphoproteome analysis.</title>
        <authorList>
            <person name="Albuquerque C.P."/>
            <person name="Smolka M.B."/>
            <person name="Payne S.H."/>
            <person name="Bafna V."/>
            <person name="Eng J."/>
            <person name="Zhou H."/>
        </authorList>
    </citation>
    <scope>PHOSPHORYLATION [LARGE SCALE ANALYSIS] AT SER-27</scope>
    <scope>IDENTIFICATION BY MASS SPECTROMETRY [LARGE SCALE ANALYSIS]</scope>
</reference>
<reference key="11">
    <citation type="journal article" date="2012" name="J. Biol. Chem.">
        <title>Exploring the topology of the Gid complex, the E3 ubiquitin ligase involved in catabolite-induced degradation of gluconeogenic enzymes.</title>
        <authorList>
            <person name="Menssen R."/>
            <person name="Schweiggert J."/>
            <person name="Schreiner J."/>
            <person name="Kusevic D."/>
            <person name="Reuther J."/>
            <person name="Braun B."/>
            <person name="Wolf D.H."/>
        </authorList>
    </citation>
    <scope>SUBUNIT</scope>
</reference>
<reference key="12">
    <citation type="journal article" date="2012" name="Proteomics">
        <title>Sites of ubiquitin attachment in Saccharomyces cerevisiae.</title>
        <authorList>
            <person name="Starita L.M."/>
            <person name="Lo R.S."/>
            <person name="Eng J.K."/>
            <person name="von Haller P.D."/>
            <person name="Fields S."/>
        </authorList>
    </citation>
    <scope>UBIQUITINATION [LARGE SCALE ANALYSIS] AT LYS-20</scope>
    <scope>IDENTIFICATION BY MASS SPECTROMETRY [LARGE SCALE ANALYSIS]</scope>
</reference>
<reference key="13">
    <citation type="journal article" date="2017" name="Science">
        <title>An N-end rule pathway that recognizes proline and destroys gluconeogenic enzymes.</title>
        <authorList>
            <person name="Chen S.J."/>
            <person name="Wu X."/>
            <person name="Wadas B."/>
            <person name="Oh J.H."/>
            <person name="Varshavsky A."/>
        </authorList>
    </citation>
    <scope>FUNCTION</scope>
</reference>
<reference key="14">
    <citation type="journal article" date="2020" name="Proc. Natl. Acad. Sci. U.S.A.">
        <title>Recognition of nonproline N-terminal residues by the Pro/N-degron pathway.</title>
        <authorList>
            <person name="Dong C."/>
            <person name="Chen S.J."/>
            <person name="Melnykov A."/>
            <person name="Weirich S."/>
            <person name="Sun K."/>
            <person name="Jeltsch A."/>
            <person name="Varshavsky A."/>
            <person name="Min J."/>
        </authorList>
    </citation>
    <scope>FUNCTION</scope>
</reference>
<reference key="15">
    <citation type="journal article" date="2021" name="Mol. Cell">
        <title>GID E3 ligase supramolecular chelate assembly configures multipronged ubiquitin targeting of an oligomeric metabolic enzyme.</title>
        <authorList>
            <person name="Sherpa D."/>
            <person name="Chrustowicz J."/>
            <person name="Qiao S."/>
            <person name="Langlois C.R."/>
            <person name="Hehl L.A."/>
            <person name="Gottemukkala K.V."/>
            <person name="Hansen F.M."/>
            <person name="Karayel O."/>
            <person name="von Gronau S."/>
            <person name="Prabu J.R."/>
            <person name="Mann M."/>
            <person name="Alpi A.F."/>
            <person name="Schulman B.A."/>
        </authorList>
    </citation>
    <scope>SUBUNIT</scope>
</reference>
<reference evidence="17" key="16">
    <citation type="journal article" date="2020" name="Mol. Cell">
        <title>Interconversion between anticipatory and active GID E3 ubiquitin ligase conformations via metabolically driven substrate receptor assembly.</title>
        <authorList>
            <person name="Qiao S."/>
            <person name="Langlois C.R."/>
            <person name="Chrustowicz J."/>
            <person name="Sherpa D."/>
            <person name="Karayel O."/>
            <person name="Hansen F.M."/>
            <person name="Beier V."/>
            <person name="von Gronau S."/>
            <person name="Bollschweiler D."/>
            <person name="Schafer T."/>
            <person name="Alpi A.F."/>
            <person name="Mann M."/>
            <person name="Prabu J.R."/>
            <person name="Schulman B.A."/>
        </authorList>
    </citation>
    <scope>STRUCTURE BY ELECTRON MICROSCOPY (3.20 ANGSTROMS)</scope>
</reference>
<reference evidence="18" key="17">
    <citation type="journal article" date="2022" name="Nat. Commun.">
        <title>Cryo-EM structures of Gid12-bound GID E3 reveal steric blockade as a mechanism inhibiting substrate ubiquitylation.</title>
        <authorList>
            <person name="Qiao S."/>
            <person name="Lee C.W."/>
            <person name="Sherpa D."/>
            <person name="Chrustowicz J."/>
            <person name="Cheng J."/>
            <person name="Duennebacke M."/>
            <person name="Steigenberger B."/>
            <person name="Karayel O."/>
            <person name="Vu D.T."/>
            <person name="von Gronau S."/>
            <person name="Mann M."/>
            <person name="Wilfling F."/>
            <person name="Schulman B.A."/>
        </authorList>
    </citation>
    <scope>STRUCTURE BY ELECTRON MICROSCOPY (3.30 ANGSTROMS)</scope>
</reference>